<evidence type="ECO:0000255" key="1">
    <source>
        <dbReference type="HAMAP-Rule" id="MF_00456"/>
    </source>
</evidence>
<name>PROB_SYMTH</name>
<keyword id="KW-0028">Amino-acid biosynthesis</keyword>
<keyword id="KW-0067">ATP-binding</keyword>
<keyword id="KW-0963">Cytoplasm</keyword>
<keyword id="KW-0418">Kinase</keyword>
<keyword id="KW-0547">Nucleotide-binding</keyword>
<keyword id="KW-0641">Proline biosynthesis</keyword>
<keyword id="KW-1185">Reference proteome</keyword>
<keyword id="KW-0808">Transferase</keyword>
<comment type="function">
    <text evidence="1">Catalyzes the transfer of a phosphate group to glutamate to form L-glutamate 5-phosphate.</text>
</comment>
<comment type="catalytic activity">
    <reaction evidence="1">
        <text>L-glutamate + ATP = L-glutamyl 5-phosphate + ADP</text>
        <dbReference type="Rhea" id="RHEA:14877"/>
        <dbReference type="ChEBI" id="CHEBI:29985"/>
        <dbReference type="ChEBI" id="CHEBI:30616"/>
        <dbReference type="ChEBI" id="CHEBI:58274"/>
        <dbReference type="ChEBI" id="CHEBI:456216"/>
        <dbReference type="EC" id="2.7.2.11"/>
    </reaction>
</comment>
<comment type="pathway">
    <text evidence="1">Amino-acid biosynthesis; L-proline biosynthesis; L-glutamate 5-semialdehyde from L-glutamate: step 1/2.</text>
</comment>
<comment type="subcellular location">
    <subcellularLocation>
        <location evidence="1">Cytoplasm</location>
    </subcellularLocation>
</comment>
<comment type="similarity">
    <text evidence="1">Belongs to the glutamate 5-kinase family.</text>
</comment>
<reference key="1">
    <citation type="journal article" date="2004" name="Nucleic Acids Res.">
        <title>Genome sequence of Symbiobacterium thermophilum, an uncultivable bacterium that depends on microbial commensalism.</title>
        <authorList>
            <person name="Ueda K."/>
            <person name="Yamashita A."/>
            <person name="Ishikawa J."/>
            <person name="Shimada M."/>
            <person name="Watsuji T."/>
            <person name="Morimura K."/>
            <person name="Ikeda H."/>
            <person name="Hattori M."/>
            <person name="Beppu T."/>
        </authorList>
    </citation>
    <scope>NUCLEOTIDE SEQUENCE [LARGE SCALE GENOMIC DNA]</scope>
    <source>
        <strain>DSM 24528 / JCM 14929 / IAM 14863 / T</strain>
    </source>
</reference>
<feature type="chain" id="PRO_0000109741" description="Glutamate 5-kinase">
    <location>
        <begin position="1"/>
        <end position="262"/>
    </location>
</feature>
<feature type="binding site" evidence="1">
    <location>
        <position position="14"/>
    </location>
    <ligand>
        <name>ATP</name>
        <dbReference type="ChEBI" id="CHEBI:30616"/>
    </ligand>
</feature>
<feature type="binding site" evidence="1">
    <location>
        <position position="54"/>
    </location>
    <ligand>
        <name>substrate</name>
    </ligand>
</feature>
<feature type="binding site" evidence="1">
    <location>
        <position position="141"/>
    </location>
    <ligand>
        <name>substrate</name>
    </ligand>
</feature>
<feature type="binding site" evidence="1">
    <location>
        <position position="153"/>
    </location>
    <ligand>
        <name>substrate</name>
    </ligand>
</feature>
<feature type="binding site" evidence="1">
    <location>
        <begin position="173"/>
        <end position="174"/>
    </location>
    <ligand>
        <name>ATP</name>
        <dbReference type="ChEBI" id="CHEBI:30616"/>
    </ligand>
</feature>
<feature type="binding site" evidence="1">
    <location>
        <begin position="214"/>
        <end position="220"/>
    </location>
    <ligand>
        <name>ATP</name>
        <dbReference type="ChEBI" id="CHEBI:30616"/>
    </ligand>
</feature>
<organism>
    <name type="scientific">Symbiobacterium thermophilum (strain DSM 24528 / JCM 14929 / IAM 14863 / T)</name>
    <dbReference type="NCBI Taxonomy" id="292459"/>
    <lineage>
        <taxon>Bacteria</taxon>
        <taxon>Bacillati</taxon>
        <taxon>Bacillota</taxon>
        <taxon>Clostridia</taxon>
        <taxon>Eubacteriales</taxon>
        <taxon>Symbiobacteriaceae</taxon>
        <taxon>Symbiobacterium</taxon>
    </lineage>
</organism>
<protein>
    <recommendedName>
        <fullName evidence="1">Glutamate 5-kinase</fullName>
        <ecNumber evidence="1">2.7.2.11</ecNumber>
    </recommendedName>
    <alternativeName>
        <fullName evidence="1">Gamma-glutamyl kinase</fullName>
        <shortName evidence="1">GK</shortName>
    </alternativeName>
</protein>
<gene>
    <name evidence="1" type="primary">proB</name>
    <name type="ordered locus">STH2540</name>
</gene>
<accession>Q67LC1</accession>
<dbReference type="EC" id="2.7.2.11" evidence="1"/>
<dbReference type="EMBL" id="AP006840">
    <property type="protein sequence ID" value="BAD41525.1"/>
    <property type="molecule type" value="Genomic_DNA"/>
</dbReference>
<dbReference type="RefSeq" id="WP_011196663.1">
    <property type="nucleotide sequence ID" value="NC_006177.1"/>
</dbReference>
<dbReference type="SMR" id="Q67LC1"/>
<dbReference type="STRING" id="292459.STH2540"/>
<dbReference type="KEGG" id="sth:STH2540"/>
<dbReference type="eggNOG" id="COG0263">
    <property type="taxonomic scope" value="Bacteria"/>
</dbReference>
<dbReference type="HOGENOM" id="CLU_025400_0_2_9"/>
<dbReference type="OrthoDB" id="9804434at2"/>
<dbReference type="UniPathway" id="UPA00098">
    <property type="reaction ID" value="UER00359"/>
</dbReference>
<dbReference type="Proteomes" id="UP000000417">
    <property type="component" value="Chromosome"/>
</dbReference>
<dbReference type="GO" id="GO:0005829">
    <property type="term" value="C:cytosol"/>
    <property type="evidence" value="ECO:0007669"/>
    <property type="project" value="TreeGrafter"/>
</dbReference>
<dbReference type="GO" id="GO:0005524">
    <property type="term" value="F:ATP binding"/>
    <property type="evidence" value="ECO:0007669"/>
    <property type="project" value="UniProtKB-KW"/>
</dbReference>
<dbReference type="GO" id="GO:0004349">
    <property type="term" value="F:glutamate 5-kinase activity"/>
    <property type="evidence" value="ECO:0007669"/>
    <property type="project" value="UniProtKB-UniRule"/>
</dbReference>
<dbReference type="GO" id="GO:0055129">
    <property type="term" value="P:L-proline biosynthetic process"/>
    <property type="evidence" value="ECO:0007669"/>
    <property type="project" value="UniProtKB-UniRule"/>
</dbReference>
<dbReference type="CDD" id="cd04242">
    <property type="entry name" value="AAK_G5K_ProB"/>
    <property type="match status" value="1"/>
</dbReference>
<dbReference type="FunFam" id="3.40.1160.10:FF:000018">
    <property type="entry name" value="Glutamate 5-kinase"/>
    <property type="match status" value="1"/>
</dbReference>
<dbReference type="Gene3D" id="3.40.1160.10">
    <property type="entry name" value="Acetylglutamate kinase-like"/>
    <property type="match status" value="1"/>
</dbReference>
<dbReference type="HAMAP" id="MF_00456">
    <property type="entry name" value="ProB"/>
    <property type="match status" value="1"/>
</dbReference>
<dbReference type="InterPro" id="IPR036393">
    <property type="entry name" value="AceGlu_kinase-like_sf"/>
</dbReference>
<dbReference type="InterPro" id="IPR001048">
    <property type="entry name" value="Asp/Glu/Uridylate_kinase"/>
</dbReference>
<dbReference type="InterPro" id="IPR041739">
    <property type="entry name" value="G5K_ProB"/>
</dbReference>
<dbReference type="InterPro" id="IPR001057">
    <property type="entry name" value="Glu/AcGlu_kinase"/>
</dbReference>
<dbReference type="InterPro" id="IPR011529">
    <property type="entry name" value="Glu_5kinase"/>
</dbReference>
<dbReference type="InterPro" id="IPR005715">
    <property type="entry name" value="Glu_5kinase/COase_Synthase"/>
</dbReference>
<dbReference type="InterPro" id="IPR019797">
    <property type="entry name" value="Glutamate_5-kinase_CS"/>
</dbReference>
<dbReference type="NCBIfam" id="TIGR01027">
    <property type="entry name" value="proB"/>
    <property type="match status" value="1"/>
</dbReference>
<dbReference type="PANTHER" id="PTHR43654">
    <property type="entry name" value="GLUTAMATE 5-KINASE"/>
    <property type="match status" value="1"/>
</dbReference>
<dbReference type="PANTHER" id="PTHR43654:SF1">
    <property type="entry name" value="ISOPENTENYL PHOSPHATE KINASE"/>
    <property type="match status" value="1"/>
</dbReference>
<dbReference type="Pfam" id="PF00696">
    <property type="entry name" value="AA_kinase"/>
    <property type="match status" value="1"/>
</dbReference>
<dbReference type="PIRSF" id="PIRSF000729">
    <property type="entry name" value="GK"/>
    <property type="match status" value="1"/>
</dbReference>
<dbReference type="PRINTS" id="PR00474">
    <property type="entry name" value="GLU5KINASE"/>
</dbReference>
<dbReference type="SUPFAM" id="SSF53633">
    <property type="entry name" value="Carbamate kinase-like"/>
    <property type="match status" value="1"/>
</dbReference>
<dbReference type="PROSITE" id="PS00902">
    <property type="entry name" value="GLUTAMATE_5_KINASE"/>
    <property type="match status" value="1"/>
</dbReference>
<proteinExistence type="inferred from homology"/>
<sequence>MRERLRHCKRVIIKVGTSTLTHPGGHLHLGRMEALVRQIADLHFEGRQVILVTSGAVGAGLGRLGLAERPAEVAAKQALAAVGQGLLMQRYEGLFSEYGLVVGQVLLTREDLEDPDRRASSAQVMERLLAWGVIPIVNENDTVTSEEIRVGDNDTLSARVAALVRADLLILLSDVDGLYPADPHLHPGLSPIPWVSPDDDLDRFAGGPGSANGTGGMVTKVAAARICAEHGIPMVLACGERPDVLRQILAGEEIGTLFSREG</sequence>